<gene>
    <name type="primary">32</name>
    <name type="synonym">ssb</name>
</gene>
<keyword id="KW-0227">DNA damage</keyword>
<keyword id="KW-0233">DNA recombination</keyword>
<keyword id="KW-0234">DNA repair</keyword>
<keyword id="KW-0235">DNA replication</keyword>
<keyword id="KW-0238">DNA-binding</keyword>
<keyword id="KW-0479">Metal-binding</keyword>
<keyword id="KW-0862">Zinc</keyword>
<keyword id="KW-0863">Zinc-finger</keyword>
<dbReference type="EMBL" id="AF033319">
    <property type="protein sequence ID" value="AAB87485.1"/>
    <property type="molecule type" value="Genomic_DNA"/>
</dbReference>
<dbReference type="SMR" id="O21947"/>
<dbReference type="GO" id="GO:0003677">
    <property type="term" value="F:DNA binding"/>
    <property type="evidence" value="ECO:0007669"/>
    <property type="project" value="UniProtKB-KW"/>
</dbReference>
<dbReference type="GO" id="GO:0008270">
    <property type="term" value="F:zinc ion binding"/>
    <property type="evidence" value="ECO:0007669"/>
    <property type="project" value="UniProtKB-KW"/>
</dbReference>
<dbReference type="GO" id="GO:0006310">
    <property type="term" value="P:DNA recombination"/>
    <property type="evidence" value="ECO:0007669"/>
    <property type="project" value="UniProtKB-KW"/>
</dbReference>
<dbReference type="GO" id="GO:0006281">
    <property type="term" value="P:DNA repair"/>
    <property type="evidence" value="ECO:0007669"/>
    <property type="project" value="UniProtKB-KW"/>
</dbReference>
<dbReference type="GO" id="GO:0006260">
    <property type="term" value="P:DNA replication"/>
    <property type="evidence" value="ECO:0007669"/>
    <property type="project" value="UniProtKB-KW"/>
</dbReference>
<dbReference type="Gene3D" id="3.90.198.10">
    <property type="entry name" value="Replication Fork Single-Stranded Dna Binding Protein"/>
    <property type="match status" value="1"/>
</dbReference>
<dbReference type="InterPro" id="IPR012340">
    <property type="entry name" value="NA-bd_OB-fold"/>
</dbReference>
<dbReference type="InterPro" id="IPR044947">
    <property type="entry name" value="Phage_T4_Gp32_ssDNA-bd_sf"/>
</dbReference>
<dbReference type="SUPFAM" id="SSF50249">
    <property type="entry name" value="Nucleic acid-binding proteins"/>
    <property type="match status" value="1"/>
</dbReference>
<sequence length="48" mass="5300">MFKRKSTAELAAQMAKLNGNKGFSSEDKGEWKLKLDNAGNGQAVIRFL</sequence>
<reference key="1">
    <citation type="submission" date="1997-11" db="EMBL/GenBank/DDBJ databases">
        <authorList>
            <person name="Theimer C.A."/>
            <person name="Krisch H.M."/>
            <person name="Giedroc D.P."/>
        </authorList>
    </citation>
    <scope>NUCLEOTIDE SEQUENCE [GENOMIC DNA]</scope>
</reference>
<protein>
    <recommendedName>
        <fullName>Single-stranded DNA-binding protein</fullName>
    </recommendedName>
    <alternativeName>
        <fullName>Gp32</fullName>
    </alternativeName>
    <alternativeName>
        <fullName>Helix-destabilizing protein</fullName>
    </alternativeName>
</protein>
<evidence type="ECO:0000250" key="1"/>
<accession>O21947</accession>
<comment type="function">
    <text>Binds preferentially to single-stranded DNA and therefore, destabilizes double-stranded DNA. It is involved in DNA replication, repair and recombination. Binds ss-DNA as the replication fork advances and stimulates the replisome processivity and accuracy.</text>
</comment>
<comment type="subunit">
    <text evidence="1">Homodimer in the absence of DNA, monomer when binding DNA.</text>
</comment>
<comment type="miscellaneous">
    <text evidence="1">Interacts with the polymerase and the uvsX and uvsY proteins.</text>
</comment>
<proteinExistence type="inferred from homology"/>
<feature type="chain" id="PRO_0000165050" description="Single-stranded DNA-binding protein">
    <location>
        <begin position="1"/>
        <end position="48" status="greater than"/>
    </location>
</feature>
<feature type="non-terminal residue">
    <location>
        <position position="48"/>
    </location>
</feature>
<organism>
    <name type="scientific">Enterobacteria phage FSalpha</name>
    <name type="common">Bacteriophage FS-alpha</name>
    <dbReference type="NCBI Taxonomy" id="69605"/>
    <lineage>
        <taxon>Viruses</taxon>
        <taxon>Duplodnaviria</taxon>
        <taxon>Heunggongvirae</taxon>
        <taxon>Uroviricota</taxon>
        <taxon>Caudoviricetes</taxon>
        <taxon>Straboviridae</taxon>
        <taxon>Tevenvirinae</taxon>
        <taxon>Tequatrovirus</taxon>
    </lineage>
</organism>
<organismHost>
    <name type="scientific">Escherichia coli</name>
    <dbReference type="NCBI Taxonomy" id="562"/>
</organismHost>
<name>VHED_BPFSA</name>